<evidence type="ECO:0000250" key="1"/>
<evidence type="ECO:0000250" key="2">
    <source>
        <dbReference type="UniProtKB" id="O08792"/>
    </source>
</evidence>
<evidence type="ECO:0000255" key="3"/>
<evidence type="ECO:0000256" key="4">
    <source>
        <dbReference type="SAM" id="MobiDB-lite"/>
    </source>
</evidence>
<evidence type="ECO:0000305" key="5"/>
<keyword id="KW-0010">Activator</keyword>
<keyword id="KW-0217">Developmental protein</keyword>
<keyword id="KW-0238">DNA-binding</keyword>
<keyword id="KW-0479">Metal-binding</keyword>
<keyword id="KW-0539">Nucleus</keyword>
<keyword id="KW-1185">Reference proteome</keyword>
<keyword id="KW-0804">Transcription</keyword>
<keyword id="KW-0805">Transcription regulation</keyword>
<keyword id="KW-0862">Zinc</keyword>
<keyword id="KW-0863">Zinc-finger</keyword>
<comment type="function">
    <text evidence="1">Transcription factor that, in osteoblasts, activates the decoy receptor for RANKL, TNFRSF11B, which in turn regulates osteoclast differentiation. Acts in synergy with the Wnt-responsive LEF1/CTNNB1 pathway. Recognizes variations of the palindromic sequence 5'-ATTCCCNNGGGAATT-3' (By similarity).</text>
</comment>
<comment type="subunit">
    <text evidence="2">Forms either a homodimer or a heterodimer with a related family member (By similarity). Interacts with SIX1 (By similarity).</text>
</comment>
<comment type="subcellular location">
    <subcellularLocation>
        <location evidence="5">Nucleus</location>
    </subcellularLocation>
</comment>
<comment type="similarity">
    <text evidence="5">Belongs to the COE family.</text>
</comment>
<organism>
    <name type="scientific">Bos taurus</name>
    <name type="common">Bovine</name>
    <dbReference type="NCBI Taxonomy" id="9913"/>
    <lineage>
        <taxon>Eukaryota</taxon>
        <taxon>Metazoa</taxon>
        <taxon>Chordata</taxon>
        <taxon>Craniata</taxon>
        <taxon>Vertebrata</taxon>
        <taxon>Euteleostomi</taxon>
        <taxon>Mammalia</taxon>
        <taxon>Eutheria</taxon>
        <taxon>Laurasiatheria</taxon>
        <taxon>Artiodactyla</taxon>
        <taxon>Ruminantia</taxon>
        <taxon>Pecora</taxon>
        <taxon>Bovidae</taxon>
        <taxon>Bovinae</taxon>
        <taxon>Bos</taxon>
    </lineage>
</organism>
<gene>
    <name type="primary">EBF2</name>
    <name type="synonym">COE2</name>
</gene>
<sequence>MFGIQDTLGRGPALKEKSLGAEMDSVRSWVRNVGVVDANVAAQSGVALSRAHFEKQPPSNLRKSNFFHFVLALYDRQGQPVEIERTAFVDFVENDKEQGNEKTNNGTHYKLQLLYSNGVRTEQDLYVRLIDSVTKQPIAYEGQNKNPEMCRVLLTHEVMCSRCCEKKSCGNRNETPSDPVIIDRFFLKFFLKCNQNCLKTAGNPRDMRRFQVVLSTTVNVDGHVLAVSDNMFVHNNSKHGRRARRLDPSEATPCIKAISPSEGWTTGGAMVIIIGDNFFDGLQVVFGTMLVWSELITPHAIRVQTPPRHIPGVVEVTLSYKSKQFCKGAPGRFIYTALNEPTIDYGFQRLQKVIPRHPGDPERLAKEMLLKRAADLVEALYGTPHNNQDIILKRAADIAEALYSVPRNPSQIPALSSSPAHSGMMGINSYGSQLGVSISESTQGNNQGYIRNTSSISPRGYSSSSTPQQSNYSTSSNSMNGYSNVPMANLGVPGSPGFLNGSPTGSPYGIMSSSPTVGSSSTSSILPFSSSVFPAVKQKSAFAPVIRPQGSPSPACSSGNGNGFRAMTGLVVPPM</sequence>
<protein>
    <recommendedName>
        <fullName>Transcription factor COE2</fullName>
    </recommendedName>
    <alternativeName>
        <fullName>Early B-cell factor 2</fullName>
        <shortName>EBF-2</shortName>
    </alternativeName>
</protein>
<reference key="1">
    <citation type="submission" date="2006-09" db="EMBL/GenBank/DDBJ databases">
        <authorList>
            <consortium name="NIH - Mammalian Gene Collection (MGC) project"/>
        </authorList>
    </citation>
    <scope>NUCLEOTIDE SEQUENCE [LARGE SCALE MRNA]</scope>
    <source>
        <strain>Hereford</strain>
        <tissue>Fetal muscle</tissue>
    </source>
</reference>
<name>COE2_BOVIN</name>
<feature type="chain" id="PRO_0000282439" description="Transcription factor COE2">
    <location>
        <begin position="1"/>
        <end position="575"/>
    </location>
</feature>
<feature type="domain" description="IPT/TIG">
    <location>
        <begin position="253"/>
        <end position="336"/>
    </location>
</feature>
<feature type="zinc finger region" description="C5-type" evidence="3">
    <location>
        <begin position="150"/>
        <end position="169"/>
    </location>
</feature>
<feature type="region of interest" description="Interaction with DNA" evidence="1">
    <location>
        <begin position="62"/>
        <end position="65"/>
    </location>
</feature>
<feature type="region of interest" description="Interaction with DNA" evidence="1">
    <location>
        <begin position="196"/>
        <end position="203"/>
    </location>
</feature>
<feature type="region of interest" description="Interaction with DNA" evidence="1">
    <location>
        <begin position="235"/>
        <end position="238"/>
    </location>
</feature>
<feature type="region of interest" description="Disordered" evidence="4">
    <location>
        <begin position="441"/>
        <end position="479"/>
    </location>
</feature>
<feature type="compositionally biased region" description="Polar residues" evidence="4">
    <location>
        <begin position="441"/>
        <end position="453"/>
    </location>
</feature>
<feature type="compositionally biased region" description="Low complexity" evidence="4">
    <location>
        <begin position="454"/>
        <end position="479"/>
    </location>
</feature>
<feature type="site" description="Interaction with DNA" evidence="1">
    <location>
        <position position="162"/>
    </location>
</feature>
<feature type="site" description="Interaction with DNA" evidence="1">
    <location>
        <position position="171"/>
    </location>
</feature>
<dbReference type="EMBL" id="BC123680">
    <property type="protein sequence ID" value="AAI23681.1"/>
    <property type="molecule type" value="mRNA"/>
</dbReference>
<dbReference type="RefSeq" id="NP_001071407.1">
    <property type="nucleotide sequence ID" value="NM_001077939.1"/>
</dbReference>
<dbReference type="SMR" id="Q08DL5"/>
<dbReference type="FunCoup" id="Q08DL5">
    <property type="interactions" value="247"/>
</dbReference>
<dbReference type="STRING" id="9913.ENSBTAP00000014368"/>
<dbReference type="PaxDb" id="9913-ENSBTAP00000014368"/>
<dbReference type="Ensembl" id="ENSBTAT00000086147.2">
    <property type="protein sequence ID" value="ENSBTAP00000073790.1"/>
    <property type="gene ID" value="ENSBTAG00000040390.4"/>
</dbReference>
<dbReference type="GeneID" id="519342"/>
<dbReference type="KEGG" id="bta:519342"/>
<dbReference type="CTD" id="64641"/>
<dbReference type="VEuPathDB" id="HostDB:ENSBTAG00000040390"/>
<dbReference type="VGNC" id="VGNC:106720">
    <property type="gene designation" value="EBF2"/>
</dbReference>
<dbReference type="eggNOG" id="KOG3836">
    <property type="taxonomic scope" value="Eukaryota"/>
</dbReference>
<dbReference type="GeneTree" id="ENSGT00950000182859"/>
<dbReference type="InParanoid" id="Q08DL5"/>
<dbReference type="OMA" id="QGYMRNS"/>
<dbReference type="OrthoDB" id="25246at2759"/>
<dbReference type="Proteomes" id="UP000009136">
    <property type="component" value="Chromosome 8"/>
</dbReference>
<dbReference type="Bgee" id="ENSBTAG00000040390">
    <property type="expression patterns" value="Expressed in intramuscular adipose tissue and 61 other cell types or tissues"/>
</dbReference>
<dbReference type="GO" id="GO:0005634">
    <property type="term" value="C:nucleus"/>
    <property type="evidence" value="ECO:0007669"/>
    <property type="project" value="UniProtKB-SubCell"/>
</dbReference>
<dbReference type="GO" id="GO:0000981">
    <property type="term" value="F:DNA-binding transcription factor activity, RNA polymerase II-specific"/>
    <property type="evidence" value="ECO:0000318"/>
    <property type="project" value="GO_Central"/>
</dbReference>
<dbReference type="GO" id="GO:0000978">
    <property type="term" value="F:RNA polymerase II cis-regulatory region sequence-specific DNA binding"/>
    <property type="evidence" value="ECO:0000318"/>
    <property type="project" value="GO_Central"/>
</dbReference>
<dbReference type="GO" id="GO:0008270">
    <property type="term" value="F:zinc ion binding"/>
    <property type="evidence" value="ECO:0007669"/>
    <property type="project" value="UniProtKB-KW"/>
</dbReference>
<dbReference type="GO" id="GO:0006357">
    <property type="term" value="P:regulation of transcription by RNA polymerase II"/>
    <property type="evidence" value="ECO:0000318"/>
    <property type="project" value="GO_Central"/>
</dbReference>
<dbReference type="CDD" id="cd11606">
    <property type="entry name" value="COE_DBD"/>
    <property type="match status" value="1"/>
</dbReference>
<dbReference type="CDD" id="cd01175">
    <property type="entry name" value="IPT_COE"/>
    <property type="match status" value="1"/>
</dbReference>
<dbReference type="FunFam" id="1.10.287.4280:FF:000001">
    <property type="entry name" value="transcription factor COE1 isoform X2"/>
    <property type="match status" value="1"/>
</dbReference>
<dbReference type="FunFam" id="2.60.40.3180:FF:000002">
    <property type="entry name" value="transcription factor COE2 isoform X1"/>
    <property type="match status" value="1"/>
</dbReference>
<dbReference type="FunFam" id="2.60.40.10:FF:001696">
    <property type="entry name" value="Transcription factor COE3"/>
    <property type="match status" value="1"/>
</dbReference>
<dbReference type="Gene3D" id="1.10.287.4280">
    <property type="match status" value="1"/>
</dbReference>
<dbReference type="Gene3D" id="2.60.40.10">
    <property type="entry name" value="Immunoglobulins"/>
    <property type="match status" value="1"/>
</dbReference>
<dbReference type="Gene3D" id="2.60.40.3180">
    <property type="entry name" value="Transcription factor COE1, DNA-binding domain"/>
    <property type="match status" value="1"/>
</dbReference>
<dbReference type="InterPro" id="IPR032200">
    <property type="entry name" value="COE_DBD"/>
</dbReference>
<dbReference type="InterPro" id="IPR038173">
    <property type="entry name" value="COE_DBD_sf"/>
</dbReference>
<dbReference type="InterPro" id="IPR032201">
    <property type="entry name" value="COE_HLH"/>
</dbReference>
<dbReference type="InterPro" id="IPR038006">
    <property type="entry name" value="COE_IPT"/>
</dbReference>
<dbReference type="InterPro" id="IPR013783">
    <property type="entry name" value="Ig-like_fold"/>
</dbReference>
<dbReference type="InterPro" id="IPR014756">
    <property type="entry name" value="Ig_E-set"/>
</dbReference>
<dbReference type="InterPro" id="IPR002909">
    <property type="entry name" value="IPT_dom"/>
</dbReference>
<dbReference type="InterPro" id="IPR003523">
    <property type="entry name" value="Transcription_factor_COE"/>
</dbReference>
<dbReference type="InterPro" id="IPR018350">
    <property type="entry name" value="Transcription_factor_COE_CS"/>
</dbReference>
<dbReference type="PANTHER" id="PTHR10747">
    <property type="entry name" value="TRANSCRIPTION FACTOR COE FAMILY MEMBER"/>
    <property type="match status" value="1"/>
</dbReference>
<dbReference type="Pfam" id="PF16422">
    <property type="entry name" value="COE1_DBD"/>
    <property type="match status" value="1"/>
</dbReference>
<dbReference type="Pfam" id="PF16423">
    <property type="entry name" value="COE1_HLH"/>
    <property type="match status" value="1"/>
</dbReference>
<dbReference type="Pfam" id="PF01833">
    <property type="entry name" value="TIG"/>
    <property type="match status" value="1"/>
</dbReference>
<dbReference type="SMART" id="SM00429">
    <property type="entry name" value="IPT"/>
    <property type="match status" value="1"/>
</dbReference>
<dbReference type="SUPFAM" id="SSF81296">
    <property type="entry name" value="E set domains"/>
    <property type="match status" value="1"/>
</dbReference>
<dbReference type="PROSITE" id="PS01345">
    <property type="entry name" value="COE"/>
    <property type="match status" value="1"/>
</dbReference>
<accession>Q08DL5</accession>
<proteinExistence type="evidence at transcript level"/>